<protein>
    <recommendedName>
        <fullName evidence="1">Enolase</fullName>
        <ecNumber evidence="1">4.2.1.11</ecNumber>
    </recommendedName>
    <alternativeName>
        <fullName evidence="1">2-phospho-D-glycerate hydro-lyase</fullName>
    </alternativeName>
    <alternativeName>
        <fullName evidence="1">2-phosphoglycerate dehydratase</fullName>
    </alternativeName>
</protein>
<proteinExistence type="inferred from homology"/>
<comment type="function">
    <text evidence="1">Catalyzes the reversible conversion of 2-phosphoglycerate (2-PG) into phosphoenolpyruvate (PEP). It is essential for the degradation of carbohydrates via glycolysis.</text>
</comment>
<comment type="catalytic activity">
    <reaction evidence="1">
        <text>(2R)-2-phosphoglycerate = phosphoenolpyruvate + H2O</text>
        <dbReference type="Rhea" id="RHEA:10164"/>
        <dbReference type="ChEBI" id="CHEBI:15377"/>
        <dbReference type="ChEBI" id="CHEBI:58289"/>
        <dbReference type="ChEBI" id="CHEBI:58702"/>
        <dbReference type="EC" id="4.2.1.11"/>
    </reaction>
</comment>
<comment type="cofactor">
    <cofactor evidence="1">
        <name>Mg(2+)</name>
        <dbReference type="ChEBI" id="CHEBI:18420"/>
    </cofactor>
    <text evidence="1">Binds a second Mg(2+) ion via substrate during catalysis.</text>
</comment>
<comment type="pathway">
    <text evidence="1">Carbohydrate degradation; glycolysis; pyruvate from D-glyceraldehyde 3-phosphate: step 4/5.</text>
</comment>
<comment type="subcellular location">
    <subcellularLocation>
        <location evidence="1">Cytoplasm</location>
    </subcellularLocation>
    <subcellularLocation>
        <location evidence="1">Secreted</location>
    </subcellularLocation>
    <subcellularLocation>
        <location evidence="1">Cell surface</location>
    </subcellularLocation>
    <text evidence="1">Fractions of enolase are present in both the cytoplasm and on the cell surface.</text>
</comment>
<comment type="similarity">
    <text evidence="1">Belongs to the enolase family.</text>
</comment>
<name>ENO_MYCGE</name>
<accession>P47647</accession>
<gene>
    <name evidence="1" type="primary">eno</name>
    <name type="ordered locus">MG407</name>
</gene>
<reference key="1">
    <citation type="journal article" date="1995" name="Science">
        <title>The minimal gene complement of Mycoplasma genitalium.</title>
        <authorList>
            <person name="Fraser C.M."/>
            <person name="Gocayne J.D."/>
            <person name="White O."/>
            <person name="Adams M.D."/>
            <person name="Clayton R.A."/>
            <person name="Fleischmann R.D."/>
            <person name="Bult C.J."/>
            <person name="Kerlavage A.R."/>
            <person name="Sutton G.G."/>
            <person name="Kelley J.M."/>
            <person name="Fritchman J.L."/>
            <person name="Weidman J.F."/>
            <person name="Small K.V."/>
            <person name="Sandusky M."/>
            <person name="Fuhrmann J.L."/>
            <person name="Nguyen D.T."/>
            <person name="Utterback T.R."/>
            <person name="Saudek D.M."/>
            <person name="Phillips C.A."/>
            <person name="Merrick J.M."/>
            <person name="Tomb J.-F."/>
            <person name="Dougherty B.A."/>
            <person name="Bott K.F."/>
            <person name="Hu P.-C."/>
            <person name="Lucier T.S."/>
            <person name="Peterson S.N."/>
            <person name="Smith H.O."/>
            <person name="Hutchison C.A. III"/>
            <person name="Venter J.C."/>
        </authorList>
    </citation>
    <scope>NUCLEOTIDE SEQUENCE [LARGE SCALE GENOMIC DNA]</scope>
    <source>
        <strain>ATCC 33530 / DSM 19775 / NCTC 10195 / G37</strain>
    </source>
</reference>
<sequence length="458" mass="50019">MGSSNLNINSKITDIFAYQVFDSRGVPTVACVVKLASGHVGEAMVPSGASTGEKEAIELRDNDPKNYFGKGVNEAVDNVNKVIAPKLIGLNAFDQLTVDQAMIKLDNTPNKAKLGANAILSVSLAVSKAAAKAQNSSLFQYISNKLIGLNTTNFVLPVPMLNVINGGAHADNYIDFQEFMIMPLGAKKMHEALKMASETFHALQNLLKKRGLNTNKGDEGGFAPNLKLAEDALDIMVEAIKLAGYKPWDDIAIAIDVAASEFYDEDKKLYVFKKGIKANILNAKDWSLTSKEMIAYLEKLTKKYPIISIEDGLSENDWEGMNQLTKTIGSHIQIVGDDTYCTNAELAKKGVAQNTTNSILIKLNQIGSISETIQTIEVAKKANWSQVISHRSGETEDTTIADLAVAAQTGQIKTGSMSRSERIAKYNRLLYIEIELGDKGKYLGWNTFTNIKPKNFNI</sequence>
<evidence type="ECO:0000255" key="1">
    <source>
        <dbReference type="HAMAP-Rule" id="MF_00318"/>
    </source>
</evidence>
<keyword id="KW-0963">Cytoplasm</keyword>
<keyword id="KW-0324">Glycolysis</keyword>
<keyword id="KW-0456">Lyase</keyword>
<keyword id="KW-0460">Magnesium</keyword>
<keyword id="KW-0479">Metal-binding</keyword>
<keyword id="KW-1185">Reference proteome</keyword>
<keyword id="KW-0964">Secreted</keyword>
<feature type="chain" id="PRO_0000133923" description="Enolase">
    <location>
        <begin position="1"/>
        <end position="458"/>
    </location>
</feature>
<feature type="active site" description="Proton donor" evidence="1">
    <location>
        <position position="219"/>
    </location>
</feature>
<feature type="active site" description="Proton acceptor" evidence="1">
    <location>
        <position position="362"/>
    </location>
</feature>
<feature type="binding site" evidence="1">
    <location>
        <position position="177"/>
    </location>
    <ligand>
        <name>(2R)-2-phosphoglycerate</name>
        <dbReference type="ChEBI" id="CHEBI:58289"/>
    </ligand>
</feature>
<feature type="binding site" evidence="1">
    <location>
        <position position="256"/>
    </location>
    <ligand>
        <name>Mg(2+)</name>
        <dbReference type="ChEBI" id="CHEBI:18420"/>
    </ligand>
</feature>
<feature type="binding site" evidence="1">
    <location>
        <position position="310"/>
    </location>
    <ligand>
        <name>Mg(2+)</name>
        <dbReference type="ChEBI" id="CHEBI:18420"/>
    </ligand>
</feature>
<feature type="binding site" evidence="1">
    <location>
        <position position="337"/>
    </location>
    <ligand>
        <name>Mg(2+)</name>
        <dbReference type="ChEBI" id="CHEBI:18420"/>
    </ligand>
</feature>
<feature type="binding site" evidence="1">
    <location>
        <position position="362"/>
    </location>
    <ligand>
        <name>(2R)-2-phosphoglycerate</name>
        <dbReference type="ChEBI" id="CHEBI:58289"/>
    </ligand>
</feature>
<feature type="binding site" evidence="1">
    <location>
        <position position="391"/>
    </location>
    <ligand>
        <name>(2R)-2-phosphoglycerate</name>
        <dbReference type="ChEBI" id="CHEBI:58289"/>
    </ligand>
</feature>
<feature type="binding site" evidence="1">
    <location>
        <position position="392"/>
    </location>
    <ligand>
        <name>(2R)-2-phosphoglycerate</name>
        <dbReference type="ChEBI" id="CHEBI:58289"/>
    </ligand>
</feature>
<feature type="binding site" evidence="1">
    <location>
        <position position="413"/>
    </location>
    <ligand>
        <name>(2R)-2-phosphoglycerate</name>
        <dbReference type="ChEBI" id="CHEBI:58289"/>
    </ligand>
</feature>
<dbReference type="EC" id="4.2.1.11" evidence="1"/>
<dbReference type="EMBL" id="L43967">
    <property type="protein sequence ID" value="AAC71635.1"/>
    <property type="molecule type" value="Genomic_DNA"/>
</dbReference>
<dbReference type="PIR" id="A64245">
    <property type="entry name" value="A64245"/>
</dbReference>
<dbReference type="RefSeq" id="WP_009885616.1">
    <property type="nucleotide sequence ID" value="NC_000908.2"/>
</dbReference>
<dbReference type="SMR" id="P47647"/>
<dbReference type="FunCoup" id="P47647">
    <property type="interactions" value="137"/>
</dbReference>
<dbReference type="STRING" id="243273.MG_407"/>
<dbReference type="GeneID" id="88282592"/>
<dbReference type="KEGG" id="mge:MG_407"/>
<dbReference type="eggNOG" id="COG0148">
    <property type="taxonomic scope" value="Bacteria"/>
</dbReference>
<dbReference type="HOGENOM" id="CLU_031223_2_1_14"/>
<dbReference type="InParanoid" id="P47647"/>
<dbReference type="OrthoDB" id="9804716at2"/>
<dbReference type="BioCyc" id="MGEN243273:G1GJ2-504-MONOMER"/>
<dbReference type="UniPathway" id="UPA00109">
    <property type="reaction ID" value="UER00187"/>
</dbReference>
<dbReference type="Proteomes" id="UP000000807">
    <property type="component" value="Chromosome"/>
</dbReference>
<dbReference type="GO" id="GO:0009986">
    <property type="term" value="C:cell surface"/>
    <property type="evidence" value="ECO:0007669"/>
    <property type="project" value="UniProtKB-SubCell"/>
</dbReference>
<dbReference type="GO" id="GO:0005576">
    <property type="term" value="C:extracellular region"/>
    <property type="evidence" value="ECO:0007669"/>
    <property type="project" value="UniProtKB-SubCell"/>
</dbReference>
<dbReference type="GO" id="GO:0000015">
    <property type="term" value="C:phosphopyruvate hydratase complex"/>
    <property type="evidence" value="ECO:0000318"/>
    <property type="project" value="GO_Central"/>
</dbReference>
<dbReference type="GO" id="GO:0000287">
    <property type="term" value="F:magnesium ion binding"/>
    <property type="evidence" value="ECO:0007669"/>
    <property type="project" value="UniProtKB-UniRule"/>
</dbReference>
<dbReference type="GO" id="GO:0004634">
    <property type="term" value="F:phosphopyruvate hydratase activity"/>
    <property type="evidence" value="ECO:0000318"/>
    <property type="project" value="GO_Central"/>
</dbReference>
<dbReference type="GO" id="GO:0006096">
    <property type="term" value="P:glycolytic process"/>
    <property type="evidence" value="ECO:0000318"/>
    <property type="project" value="GO_Central"/>
</dbReference>
<dbReference type="CDD" id="cd03313">
    <property type="entry name" value="enolase"/>
    <property type="match status" value="1"/>
</dbReference>
<dbReference type="FunFam" id="3.30.390.10:FF:000001">
    <property type="entry name" value="Enolase"/>
    <property type="match status" value="1"/>
</dbReference>
<dbReference type="Gene3D" id="3.20.20.120">
    <property type="entry name" value="Enolase-like C-terminal domain"/>
    <property type="match status" value="1"/>
</dbReference>
<dbReference type="Gene3D" id="3.30.390.10">
    <property type="entry name" value="Enolase-like, N-terminal domain"/>
    <property type="match status" value="1"/>
</dbReference>
<dbReference type="HAMAP" id="MF_00318">
    <property type="entry name" value="Enolase"/>
    <property type="match status" value="1"/>
</dbReference>
<dbReference type="InterPro" id="IPR000941">
    <property type="entry name" value="Enolase"/>
</dbReference>
<dbReference type="InterPro" id="IPR036849">
    <property type="entry name" value="Enolase-like_C_sf"/>
</dbReference>
<dbReference type="InterPro" id="IPR029017">
    <property type="entry name" value="Enolase-like_N"/>
</dbReference>
<dbReference type="InterPro" id="IPR020810">
    <property type="entry name" value="Enolase_C"/>
</dbReference>
<dbReference type="InterPro" id="IPR020809">
    <property type="entry name" value="Enolase_CS"/>
</dbReference>
<dbReference type="InterPro" id="IPR020811">
    <property type="entry name" value="Enolase_N"/>
</dbReference>
<dbReference type="NCBIfam" id="TIGR01060">
    <property type="entry name" value="eno"/>
    <property type="match status" value="1"/>
</dbReference>
<dbReference type="PANTHER" id="PTHR11902">
    <property type="entry name" value="ENOLASE"/>
    <property type="match status" value="1"/>
</dbReference>
<dbReference type="PANTHER" id="PTHR11902:SF1">
    <property type="entry name" value="ENOLASE"/>
    <property type="match status" value="1"/>
</dbReference>
<dbReference type="Pfam" id="PF00113">
    <property type="entry name" value="Enolase_C"/>
    <property type="match status" value="1"/>
</dbReference>
<dbReference type="Pfam" id="PF03952">
    <property type="entry name" value="Enolase_N"/>
    <property type="match status" value="1"/>
</dbReference>
<dbReference type="PIRSF" id="PIRSF001400">
    <property type="entry name" value="Enolase"/>
    <property type="match status" value="1"/>
</dbReference>
<dbReference type="PRINTS" id="PR00148">
    <property type="entry name" value="ENOLASE"/>
</dbReference>
<dbReference type="SFLD" id="SFLDF00002">
    <property type="entry name" value="enolase"/>
    <property type="match status" value="1"/>
</dbReference>
<dbReference type="SFLD" id="SFLDG00178">
    <property type="entry name" value="enolase"/>
    <property type="match status" value="1"/>
</dbReference>
<dbReference type="SMART" id="SM01192">
    <property type="entry name" value="Enolase_C"/>
    <property type="match status" value="1"/>
</dbReference>
<dbReference type="SMART" id="SM01193">
    <property type="entry name" value="Enolase_N"/>
    <property type="match status" value="1"/>
</dbReference>
<dbReference type="SUPFAM" id="SSF51604">
    <property type="entry name" value="Enolase C-terminal domain-like"/>
    <property type="match status" value="1"/>
</dbReference>
<dbReference type="SUPFAM" id="SSF54826">
    <property type="entry name" value="Enolase N-terminal domain-like"/>
    <property type="match status" value="1"/>
</dbReference>
<dbReference type="PROSITE" id="PS00164">
    <property type="entry name" value="ENOLASE"/>
    <property type="match status" value="1"/>
</dbReference>
<organism>
    <name type="scientific">Mycoplasma genitalium (strain ATCC 33530 / DSM 19775 / NCTC 10195 / G37)</name>
    <name type="common">Mycoplasmoides genitalium</name>
    <dbReference type="NCBI Taxonomy" id="243273"/>
    <lineage>
        <taxon>Bacteria</taxon>
        <taxon>Bacillati</taxon>
        <taxon>Mycoplasmatota</taxon>
        <taxon>Mycoplasmoidales</taxon>
        <taxon>Mycoplasmoidaceae</taxon>
        <taxon>Mycoplasmoides</taxon>
    </lineage>
</organism>